<proteinExistence type="evidence at transcript level"/>
<accession>Q10KF0</accession>
<accession>B7E2Y8</accession>
<accession>O22539</accession>
<accession>Q6AVF6</accession>
<accession>Q9LSU2</accession>
<reference key="1">
    <citation type="journal article" date="2000" name="Gene">
        <title>Primary structural features of the 20S proteasome subunits of rice (Oryza sativa).</title>
        <authorList>
            <person name="Sassa H."/>
            <person name="Oguchi S."/>
            <person name="Inoue T."/>
            <person name="Hirano H."/>
        </authorList>
    </citation>
    <scope>NUCLEOTIDE SEQUENCE [MRNA]</scope>
    <source>
        <strain>cv. Nipponbare</strain>
    </source>
</reference>
<reference key="2">
    <citation type="journal article" date="2005" name="Genome Res.">
        <title>Sequence, annotation, and analysis of synteny between rice chromosome 3 and diverged grass species.</title>
        <authorList>
            <consortium name="The rice chromosome 3 sequencing consortium"/>
            <person name="Buell C.R."/>
            <person name="Yuan Q."/>
            <person name="Ouyang S."/>
            <person name="Liu J."/>
            <person name="Zhu W."/>
            <person name="Wang A."/>
            <person name="Maiti R."/>
            <person name="Haas B."/>
            <person name="Wortman J."/>
            <person name="Pertea M."/>
            <person name="Jones K.M."/>
            <person name="Kim M."/>
            <person name="Overton L."/>
            <person name="Tsitrin T."/>
            <person name="Fadrosh D."/>
            <person name="Bera J."/>
            <person name="Weaver B."/>
            <person name="Jin S."/>
            <person name="Johri S."/>
            <person name="Reardon M."/>
            <person name="Webb K."/>
            <person name="Hill J."/>
            <person name="Moffat K."/>
            <person name="Tallon L."/>
            <person name="Van Aken S."/>
            <person name="Lewis M."/>
            <person name="Utterback T."/>
            <person name="Feldblyum T."/>
            <person name="Zismann V."/>
            <person name="Iobst S."/>
            <person name="Hsiao J."/>
            <person name="de Vazeille A.R."/>
            <person name="Salzberg S.L."/>
            <person name="White O."/>
            <person name="Fraser C.M."/>
            <person name="Yu Y."/>
            <person name="Kim H."/>
            <person name="Rambo T."/>
            <person name="Currie J."/>
            <person name="Collura K."/>
            <person name="Kernodle-Thompson S."/>
            <person name="Wei F."/>
            <person name="Kudrna K."/>
            <person name="Ammiraju J.S.S."/>
            <person name="Luo M."/>
            <person name="Goicoechea J.L."/>
            <person name="Wing R.A."/>
            <person name="Henry D."/>
            <person name="Oates R."/>
            <person name="Palmer M."/>
            <person name="Pries G."/>
            <person name="Saski C."/>
            <person name="Simmons J."/>
            <person name="Soderlund C."/>
            <person name="Nelson W."/>
            <person name="de la Bastide M."/>
            <person name="Spiegel L."/>
            <person name="Nascimento L."/>
            <person name="Huang E."/>
            <person name="Preston R."/>
            <person name="Zutavern T."/>
            <person name="Palmer L."/>
            <person name="O'Shaughnessy A."/>
            <person name="Dike S."/>
            <person name="McCombie W.R."/>
            <person name="Minx P."/>
            <person name="Cordum H."/>
            <person name="Wilson R."/>
            <person name="Jin W."/>
            <person name="Lee H.R."/>
            <person name="Jiang J."/>
            <person name="Jackson S."/>
        </authorList>
    </citation>
    <scope>NUCLEOTIDE SEQUENCE [LARGE SCALE GENOMIC DNA]</scope>
    <source>
        <strain>cv. Nipponbare</strain>
    </source>
</reference>
<reference key="3">
    <citation type="journal article" date="2005" name="Nature">
        <title>The map-based sequence of the rice genome.</title>
        <authorList>
            <consortium name="International rice genome sequencing project (IRGSP)"/>
        </authorList>
    </citation>
    <scope>NUCLEOTIDE SEQUENCE [LARGE SCALE GENOMIC DNA]</scope>
    <source>
        <strain>cv. Nipponbare</strain>
    </source>
</reference>
<reference key="4">
    <citation type="journal article" date="2008" name="Nucleic Acids Res.">
        <title>The rice annotation project database (RAP-DB): 2008 update.</title>
        <authorList>
            <consortium name="The rice annotation project (RAP)"/>
        </authorList>
    </citation>
    <scope>GENOME REANNOTATION</scope>
    <source>
        <strain>cv. Nipponbare</strain>
    </source>
</reference>
<reference key="5">
    <citation type="journal article" date="2013" name="Rice">
        <title>Improvement of the Oryza sativa Nipponbare reference genome using next generation sequence and optical map data.</title>
        <authorList>
            <person name="Kawahara Y."/>
            <person name="de la Bastide M."/>
            <person name="Hamilton J.P."/>
            <person name="Kanamori H."/>
            <person name="McCombie W.R."/>
            <person name="Ouyang S."/>
            <person name="Schwartz D.C."/>
            <person name="Tanaka T."/>
            <person name="Wu J."/>
            <person name="Zhou S."/>
            <person name="Childs K.L."/>
            <person name="Davidson R.M."/>
            <person name="Lin H."/>
            <person name="Quesada-Ocampo L."/>
            <person name="Vaillancourt B."/>
            <person name="Sakai H."/>
            <person name="Lee S.S."/>
            <person name="Kim J."/>
            <person name="Numa H."/>
            <person name="Itoh T."/>
            <person name="Buell C.R."/>
            <person name="Matsumoto T."/>
        </authorList>
    </citation>
    <scope>GENOME REANNOTATION</scope>
    <source>
        <strain>cv. Nipponbare</strain>
    </source>
</reference>
<reference key="6">
    <citation type="journal article" date="2005" name="PLoS Biol.">
        <title>The genomes of Oryza sativa: a history of duplications.</title>
        <authorList>
            <person name="Yu J."/>
            <person name="Wang J."/>
            <person name="Lin W."/>
            <person name="Li S."/>
            <person name="Li H."/>
            <person name="Zhou J."/>
            <person name="Ni P."/>
            <person name="Dong W."/>
            <person name="Hu S."/>
            <person name="Zeng C."/>
            <person name="Zhang J."/>
            <person name="Zhang Y."/>
            <person name="Li R."/>
            <person name="Xu Z."/>
            <person name="Li S."/>
            <person name="Li X."/>
            <person name="Zheng H."/>
            <person name="Cong L."/>
            <person name="Lin L."/>
            <person name="Yin J."/>
            <person name="Geng J."/>
            <person name="Li G."/>
            <person name="Shi J."/>
            <person name="Liu J."/>
            <person name="Lv H."/>
            <person name="Li J."/>
            <person name="Wang J."/>
            <person name="Deng Y."/>
            <person name="Ran L."/>
            <person name="Shi X."/>
            <person name="Wang X."/>
            <person name="Wu Q."/>
            <person name="Li C."/>
            <person name="Ren X."/>
            <person name="Wang J."/>
            <person name="Wang X."/>
            <person name="Li D."/>
            <person name="Liu D."/>
            <person name="Zhang X."/>
            <person name="Ji Z."/>
            <person name="Zhao W."/>
            <person name="Sun Y."/>
            <person name="Zhang Z."/>
            <person name="Bao J."/>
            <person name="Han Y."/>
            <person name="Dong L."/>
            <person name="Ji J."/>
            <person name="Chen P."/>
            <person name="Wu S."/>
            <person name="Liu J."/>
            <person name="Xiao Y."/>
            <person name="Bu D."/>
            <person name="Tan J."/>
            <person name="Yang L."/>
            <person name="Ye C."/>
            <person name="Zhang J."/>
            <person name="Xu J."/>
            <person name="Zhou Y."/>
            <person name="Yu Y."/>
            <person name="Zhang B."/>
            <person name="Zhuang S."/>
            <person name="Wei H."/>
            <person name="Liu B."/>
            <person name="Lei M."/>
            <person name="Yu H."/>
            <person name="Li Y."/>
            <person name="Xu H."/>
            <person name="Wei S."/>
            <person name="He X."/>
            <person name="Fang L."/>
            <person name="Zhang Z."/>
            <person name="Zhang Y."/>
            <person name="Huang X."/>
            <person name="Su Z."/>
            <person name="Tong W."/>
            <person name="Li J."/>
            <person name="Tong Z."/>
            <person name="Li S."/>
            <person name="Ye J."/>
            <person name="Wang L."/>
            <person name="Fang L."/>
            <person name="Lei T."/>
            <person name="Chen C.-S."/>
            <person name="Chen H.-C."/>
            <person name="Xu Z."/>
            <person name="Li H."/>
            <person name="Huang H."/>
            <person name="Zhang F."/>
            <person name="Xu H."/>
            <person name="Li N."/>
            <person name="Zhao C."/>
            <person name="Li S."/>
            <person name="Dong L."/>
            <person name="Huang Y."/>
            <person name="Li L."/>
            <person name="Xi Y."/>
            <person name="Qi Q."/>
            <person name="Li W."/>
            <person name="Zhang B."/>
            <person name="Hu W."/>
            <person name="Zhang Y."/>
            <person name="Tian X."/>
            <person name="Jiao Y."/>
            <person name="Liang X."/>
            <person name="Jin J."/>
            <person name="Gao L."/>
            <person name="Zheng W."/>
            <person name="Hao B."/>
            <person name="Liu S.-M."/>
            <person name="Wang W."/>
            <person name="Yuan L."/>
            <person name="Cao M."/>
            <person name="McDermott J."/>
            <person name="Samudrala R."/>
            <person name="Wang J."/>
            <person name="Wong G.K.-S."/>
            <person name="Yang H."/>
        </authorList>
    </citation>
    <scope>NUCLEOTIDE SEQUENCE [LARGE SCALE GENOMIC DNA]</scope>
    <source>
        <strain>cv. Nipponbare</strain>
    </source>
</reference>
<reference key="7">
    <citation type="journal article" date="2003" name="Science">
        <title>Collection, mapping, and annotation of over 28,000 cDNA clones from japonica rice.</title>
        <authorList>
            <consortium name="The rice full-length cDNA consortium"/>
        </authorList>
    </citation>
    <scope>NUCLEOTIDE SEQUENCE [LARGE SCALE MRNA]</scope>
    <source>
        <strain>cv. Nipponbare</strain>
    </source>
</reference>
<protein>
    <recommendedName>
        <fullName>Proteasome subunit alpha type-2</fullName>
    </recommendedName>
    <alternativeName>
        <fullName>20S proteasome alpha subunit B</fullName>
    </alternativeName>
    <alternativeName>
        <fullName>20S proteasome subunit alpha-2</fullName>
    </alternativeName>
</protein>
<feature type="chain" id="PRO_0000124087" description="Proteasome subunit alpha type-2">
    <location>
        <begin position="1"/>
        <end position="235"/>
    </location>
</feature>
<sequence>MGDSQYSFSLTTFSPSGKLVQIEHALTAVGSGQTSLGIKAANGVVIATEKKLPSILVDETSVQKIQSLTPNIGVVYSGMGPDFRVLVRKSRKQAQQYYRLYKETIPVTQLVRETAAVMQEFTQSGGVRPFGVSLLIAGYDDNGPQLYQVDPSGSYFSWKASAMGKNVSNAKTFLEKRYTEDMELDDAIHTAILTLKEGYEGQISANNIEIGIIRSDREFKVLSPAEIKDFLEEVE</sequence>
<comment type="function">
    <text>The proteasome is a multicatalytic proteinase complex which is characterized by its ability to cleave peptides with Arg, Phe, Tyr, Leu, and Glu adjacent to the leaving group at neutral or slightly basic pH. The proteasome has an ATP-dependent proteolytic activity.</text>
</comment>
<comment type="subunit">
    <text evidence="1">The 26S proteasome consists of a 20S proteasome core and two 19S regulatory subunits. The 20S proteasome core is composed of 28 subunits that are arranged in four stacked rings, resulting in a barrel-shaped structure. The two end rings are each formed by seven alpha subunits, and the two central rings are each formed by seven beta subunits. The catalytic chamber with the active sites is on the inside of the barrel (By similarity).</text>
</comment>
<comment type="subcellular location">
    <subcellularLocation>
        <location evidence="1">Cytoplasm</location>
    </subcellularLocation>
    <subcellularLocation>
        <location evidence="1">Nucleus</location>
    </subcellularLocation>
</comment>
<comment type="similarity">
    <text evidence="2">Belongs to the peptidase T1A family.</text>
</comment>
<evidence type="ECO:0000250" key="1"/>
<evidence type="ECO:0000255" key="2">
    <source>
        <dbReference type="PROSITE-ProRule" id="PRU00808"/>
    </source>
</evidence>
<evidence type="ECO:0000312" key="3">
    <source>
        <dbReference type="EMBL" id="EEE59166.1"/>
    </source>
</evidence>
<gene>
    <name type="primary">PAB1</name>
    <name type="ordered locus">Os03g0387100</name>
    <name type="ordered locus">LOC_Os03g26970</name>
    <name evidence="3" type="ORF">OsJ_11088</name>
    <name type="ORF">OSJNBb0058G04.11</name>
</gene>
<keyword id="KW-0963">Cytoplasm</keyword>
<keyword id="KW-0539">Nucleus</keyword>
<keyword id="KW-0647">Proteasome</keyword>
<keyword id="KW-1185">Reference proteome</keyword>
<name>PSA2_ORYSJ</name>
<organism>
    <name type="scientific">Oryza sativa subsp. japonica</name>
    <name type="common">Rice</name>
    <dbReference type="NCBI Taxonomy" id="39947"/>
    <lineage>
        <taxon>Eukaryota</taxon>
        <taxon>Viridiplantae</taxon>
        <taxon>Streptophyta</taxon>
        <taxon>Embryophyta</taxon>
        <taxon>Tracheophyta</taxon>
        <taxon>Spermatophyta</taxon>
        <taxon>Magnoliopsida</taxon>
        <taxon>Liliopsida</taxon>
        <taxon>Poales</taxon>
        <taxon>Poaceae</taxon>
        <taxon>BOP clade</taxon>
        <taxon>Oryzoideae</taxon>
        <taxon>Oryzeae</taxon>
        <taxon>Oryzinae</taxon>
        <taxon>Oryza</taxon>
        <taxon>Oryza sativa</taxon>
    </lineage>
</organism>
<dbReference type="EMBL" id="AB026559">
    <property type="protein sequence ID" value="BAA96830.1"/>
    <property type="molecule type" value="mRNA"/>
</dbReference>
<dbReference type="EMBL" id="AC103551">
    <property type="protein sequence ID" value="AAT78811.1"/>
    <property type="molecule type" value="Genomic_DNA"/>
</dbReference>
<dbReference type="EMBL" id="DP000009">
    <property type="protein sequence ID" value="ABF96319.1"/>
    <property type="molecule type" value="Genomic_DNA"/>
</dbReference>
<dbReference type="EMBL" id="AP008209">
    <property type="protein sequence ID" value="BAF12173.1"/>
    <property type="molecule type" value="Genomic_DNA"/>
</dbReference>
<dbReference type="EMBL" id="AP014959">
    <property type="protein sequence ID" value="BAS84482.1"/>
    <property type="molecule type" value="Genomic_DNA"/>
</dbReference>
<dbReference type="EMBL" id="CM000140">
    <property type="protein sequence ID" value="EEE59166.1"/>
    <property type="molecule type" value="Genomic_DNA"/>
</dbReference>
<dbReference type="EMBL" id="AK058567">
    <property type="protein sequence ID" value="BAG86735.1"/>
    <property type="molecule type" value="mRNA"/>
</dbReference>
<dbReference type="EMBL" id="AK101195">
    <property type="protein sequence ID" value="BAG94950.1"/>
    <property type="molecule type" value="mRNA"/>
</dbReference>
<dbReference type="RefSeq" id="XP_015628148.1">
    <property type="nucleotide sequence ID" value="XM_015772662.1"/>
</dbReference>
<dbReference type="SMR" id="Q10KF0"/>
<dbReference type="FunCoup" id="Q10KF0">
    <property type="interactions" value="3430"/>
</dbReference>
<dbReference type="STRING" id="39947.Q10KF0"/>
<dbReference type="PaxDb" id="39947-Q10KF0"/>
<dbReference type="EnsemblPlants" id="Os03t0387100-01">
    <property type="protein sequence ID" value="Os03t0387100-01"/>
    <property type="gene ID" value="Os03g0387100"/>
</dbReference>
<dbReference type="Gramene" id="Os03t0387100-01">
    <property type="protein sequence ID" value="Os03t0387100-01"/>
    <property type="gene ID" value="Os03g0387100"/>
</dbReference>
<dbReference type="KEGG" id="dosa:Os03g0387100"/>
<dbReference type="eggNOG" id="KOG0181">
    <property type="taxonomic scope" value="Eukaryota"/>
</dbReference>
<dbReference type="HOGENOM" id="CLU_035750_4_1_1"/>
<dbReference type="InParanoid" id="Q10KF0"/>
<dbReference type="OMA" id="WKACANG"/>
<dbReference type="OrthoDB" id="431557at2759"/>
<dbReference type="Proteomes" id="UP000000763">
    <property type="component" value="Chromosome 3"/>
</dbReference>
<dbReference type="Proteomes" id="UP000007752">
    <property type="component" value="Chromosome 3"/>
</dbReference>
<dbReference type="Proteomes" id="UP000059680">
    <property type="component" value="Chromosome 3"/>
</dbReference>
<dbReference type="GO" id="GO:0005737">
    <property type="term" value="C:cytoplasm"/>
    <property type="evidence" value="ECO:0007669"/>
    <property type="project" value="UniProtKB-SubCell"/>
</dbReference>
<dbReference type="GO" id="GO:0005634">
    <property type="term" value="C:nucleus"/>
    <property type="evidence" value="ECO:0007669"/>
    <property type="project" value="UniProtKB-SubCell"/>
</dbReference>
<dbReference type="GO" id="GO:0019773">
    <property type="term" value="C:proteasome core complex, alpha-subunit complex"/>
    <property type="evidence" value="ECO:0000250"/>
    <property type="project" value="UniProtKB"/>
</dbReference>
<dbReference type="GO" id="GO:0043161">
    <property type="term" value="P:proteasome-mediated ubiquitin-dependent protein catabolic process"/>
    <property type="evidence" value="ECO:0000318"/>
    <property type="project" value="GO_Central"/>
</dbReference>
<dbReference type="CDD" id="cd03750">
    <property type="entry name" value="proteasome_alpha_type_2"/>
    <property type="match status" value="1"/>
</dbReference>
<dbReference type="FunFam" id="3.60.20.10:FF:000028">
    <property type="entry name" value="Proteasome subunit alpha type"/>
    <property type="match status" value="1"/>
</dbReference>
<dbReference type="Gene3D" id="3.60.20.10">
    <property type="entry name" value="Glutamine Phosphoribosylpyrophosphate, subunit 1, domain 1"/>
    <property type="match status" value="1"/>
</dbReference>
<dbReference type="InterPro" id="IPR029055">
    <property type="entry name" value="Ntn_hydrolases_N"/>
</dbReference>
<dbReference type="InterPro" id="IPR050115">
    <property type="entry name" value="Proteasome_alpha"/>
</dbReference>
<dbReference type="InterPro" id="IPR023332">
    <property type="entry name" value="Proteasome_alpha-type"/>
</dbReference>
<dbReference type="InterPro" id="IPR000426">
    <property type="entry name" value="Proteasome_asu_N"/>
</dbReference>
<dbReference type="InterPro" id="IPR001353">
    <property type="entry name" value="Proteasome_sua/b"/>
</dbReference>
<dbReference type="NCBIfam" id="NF003075">
    <property type="entry name" value="PRK03996.1"/>
    <property type="match status" value="1"/>
</dbReference>
<dbReference type="PANTHER" id="PTHR11599">
    <property type="entry name" value="PROTEASOME SUBUNIT ALPHA/BETA"/>
    <property type="match status" value="1"/>
</dbReference>
<dbReference type="Pfam" id="PF00227">
    <property type="entry name" value="Proteasome"/>
    <property type="match status" value="1"/>
</dbReference>
<dbReference type="Pfam" id="PF10584">
    <property type="entry name" value="Proteasome_A_N"/>
    <property type="match status" value="1"/>
</dbReference>
<dbReference type="SMART" id="SM00948">
    <property type="entry name" value="Proteasome_A_N"/>
    <property type="match status" value="1"/>
</dbReference>
<dbReference type="SUPFAM" id="SSF56235">
    <property type="entry name" value="N-terminal nucleophile aminohydrolases (Ntn hydrolases)"/>
    <property type="match status" value="1"/>
</dbReference>
<dbReference type="PROSITE" id="PS00388">
    <property type="entry name" value="PROTEASOME_ALPHA_1"/>
    <property type="match status" value="1"/>
</dbReference>
<dbReference type="PROSITE" id="PS51475">
    <property type="entry name" value="PROTEASOME_ALPHA_2"/>
    <property type="match status" value="1"/>
</dbReference>